<feature type="signal peptide" evidence="1">
    <location>
        <begin position="1"/>
        <end position="24"/>
    </location>
</feature>
<feature type="chain" id="PRO_0000419263" description="Transmembrane protein 178B">
    <location>
        <begin position="25"/>
        <end position="314"/>
    </location>
</feature>
<feature type="transmembrane region" description="Helical" evidence="1">
    <location>
        <begin position="194"/>
        <end position="214"/>
    </location>
</feature>
<feature type="transmembrane region" description="Helical" evidence="1">
    <location>
        <begin position="228"/>
        <end position="248"/>
    </location>
</feature>
<feature type="transmembrane region" description="Helical" evidence="1">
    <location>
        <begin position="274"/>
        <end position="294"/>
    </location>
</feature>
<feature type="region of interest" description="Disordered" evidence="2">
    <location>
        <begin position="32"/>
        <end position="83"/>
    </location>
</feature>
<feature type="compositionally biased region" description="Basic residues" evidence="2">
    <location>
        <begin position="36"/>
        <end position="45"/>
    </location>
</feature>
<keyword id="KW-0472">Membrane</keyword>
<keyword id="KW-1185">Reference proteome</keyword>
<keyword id="KW-0732">Signal</keyword>
<keyword id="KW-0812">Transmembrane</keyword>
<keyword id="KW-1133">Transmembrane helix</keyword>
<comment type="subcellular location">
    <subcellularLocation>
        <location evidence="3">Membrane</location>
        <topology evidence="3">Multi-pass membrane protein</topology>
    </subcellularLocation>
</comment>
<comment type="similarity">
    <text evidence="3">Belongs to the TMEM178 family.</text>
</comment>
<protein>
    <recommendedName>
        <fullName>Transmembrane protein 178B</fullName>
    </recommendedName>
</protein>
<gene>
    <name type="primary">tmem178b</name>
    <name type="synonym">tmem178.2</name>
    <name type="ORF">TNeu089c06.1</name>
</gene>
<sequence>MRLLAGAGLCLALAALALLAVALSTDHWYETDARRHRDRCRKPGGKRNDPGYMYTPGQHLPLRGEPPSSRIRSPRGGEPGGVRMISRAEDLGVRGLRERPTGARDLPLSRPYLATDPHCSRRFNSTVSGLWRKCHRDGFDKDTEELILKGIVERCTSVRYYYTSSSLPPNLSVNVTKTIRQDEWHALHLRRMTAGFIGMAVSIILFGWMVGVLGCCKQHDLMQYVAGLLFLMGGTCCIISLCTCVAGINFELSRYPRSIYSLPEEISHGYGWSMFCAWGGLGLTLLSGFLCTLAPSLSASQSAVHKPRQENGAV</sequence>
<dbReference type="EMBL" id="CR926218">
    <property type="protein sequence ID" value="CAJ82608.1"/>
    <property type="molecule type" value="mRNA"/>
</dbReference>
<dbReference type="EMBL" id="AAMC01121757">
    <property type="status" value="NOT_ANNOTATED_CDS"/>
    <property type="molecule type" value="Genomic_DNA"/>
</dbReference>
<dbReference type="EMBL" id="AAMC01121758">
    <property type="status" value="NOT_ANNOTATED_CDS"/>
    <property type="molecule type" value="Genomic_DNA"/>
</dbReference>
<dbReference type="EMBL" id="AAMC01121759">
    <property type="status" value="NOT_ANNOTATED_CDS"/>
    <property type="molecule type" value="Genomic_DNA"/>
</dbReference>
<dbReference type="EMBL" id="BC067318">
    <property type="protein sequence ID" value="AAH67318.1"/>
    <property type="molecule type" value="mRNA"/>
</dbReference>
<dbReference type="RefSeq" id="NP_001001190.1">
    <property type="nucleotide sequence ID" value="NM_001001190.1"/>
</dbReference>
<dbReference type="PaxDb" id="8364-ENSXETP00000017361"/>
<dbReference type="DNASU" id="407851"/>
<dbReference type="GeneID" id="407851"/>
<dbReference type="KEGG" id="xtr:407851"/>
<dbReference type="AGR" id="Xenbase:XB-GENE-5809007"/>
<dbReference type="CTD" id="407851"/>
<dbReference type="Xenbase" id="XB-GENE-5809007">
    <property type="gene designation" value="tmem178.2"/>
</dbReference>
<dbReference type="eggNOG" id="ENOG502QSX0">
    <property type="taxonomic scope" value="Eukaryota"/>
</dbReference>
<dbReference type="HOGENOM" id="CLU_961492_0_0_1"/>
<dbReference type="InParanoid" id="F6V1J6"/>
<dbReference type="OMA" id="AIESHCS"/>
<dbReference type="OrthoDB" id="9941453at2759"/>
<dbReference type="PhylomeDB" id="F6V1J6"/>
<dbReference type="Proteomes" id="UP000008143">
    <property type="component" value="Chromosome 4"/>
</dbReference>
<dbReference type="Bgee" id="ENSXETG00000007915">
    <property type="expression patterns" value="Expressed in brain and 10 other cell types or tissues"/>
</dbReference>
<dbReference type="ExpressionAtlas" id="F6V1J6">
    <property type="expression patterns" value="baseline"/>
</dbReference>
<dbReference type="GO" id="GO:0016020">
    <property type="term" value="C:membrane"/>
    <property type="evidence" value="ECO:0007669"/>
    <property type="project" value="UniProtKB-SubCell"/>
</dbReference>
<dbReference type="Gene3D" id="1.20.140.150">
    <property type="match status" value="1"/>
</dbReference>
<dbReference type="InterPro" id="IPR004031">
    <property type="entry name" value="PMP22/EMP/MP20/Claudin"/>
</dbReference>
<dbReference type="InterPro" id="IPR039625">
    <property type="entry name" value="T178A/B"/>
</dbReference>
<dbReference type="PANTHER" id="PTHR32005:SF3">
    <property type="entry name" value="SI:CH211-150G13.3-RELATED"/>
    <property type="match status" value="1"/>
</dbReference>
<dbReference type="PANTHER" id="PTHR32005">
    <property type="entry name" value="TRANSMEMBRANE PROTEIN 178B-RELATED"/>
    <property type="match status" value="1"/>
</dbReference>
<dbReference type="Pfam" id="PF13903">
    <property type="entry name" value="Claudin_2"/>
    <property type="match status" value="1"/>
</dbReference>
<dbReference type="PRINTS" id="PR01077">
    <property type="entry name" value="CLAUDIN"/>
</dbReference>
<name>T178B_XENTR</name>
<proteinExistence type="evidence at transcript level"/>
<accession>F6V1J6</accession>
<accession>Q6NX20</accession>
<organism>
    <name type="scientific">Xenopus tropicalis</name>
    <name type="common">Western clawed frog</name>
    <name type="synonym">Silurana tropicalis</name>
    <dbReference type="NCBI Taxonomy" id="8364"/>
    <lineage>
        <taxon>Eukaryota</taxon>
        <taxon>Metazoa</taxon>
        <taxon>Chordata</taxon>
        <taxon>Craniata</taxon>
        <taxon>Vertebrata</taxon>
        <taxon>Euteleostomi</taxon>
        <taxon>Amphibia</taxon>
        <taxon>Batrachia</taxon>
        <taxon>Anura</taxon>
        <taxon>Pipoidea</taxon>
        <taxon>Pipidae</taxon>
        <taxon>Xenopodinae</taxon>
        <taxon>Xenopus</taxon>
        <taxon>Silurana</taxon>
    </lineage>
</organism>
<reference key="1">
    <citation type="submission" date="2006-10" db="EMBL/GenBank/DDBJ databases">
        <authorList>
            <consortium name="Sanger Xenopus tropicalis EST/cDNA project"/>
        </authorList>
    </citation>
    <scope>NUCLEOTIDE SEQUENCE [LARGE SCALE MRNA]</scope>
    <source>
        <tissue>Neurula</tissue>
    </source>
</reference>
<reference key="2">
    <citation type="journal article" date="2010" name="Science">
        <title>The genome of the Western clawed frog Xenopus tropicalis.</title>
        <authorList>
            <person name="Hellsten U."/>
            <person name="Harland R.M."/>
            <person name="Gilchrist M.J."/>
            <person name="Hendrix D."/>
            <person name="Jurka J."/>
            <person name="Kapitonov V."/>
            <person name="Ovcharenko I."/>
            <person name="Putnam N.H."/>
            <person name="Shu S."/>
            <person name="Taher L."/>
            <person name="Blitz I.L."/>
            <person name="Blumberg B."/>
            <person name="Dichmann D.S."/>
            <person name="Dubchak I."/>
            <person name="Amaya E."/>
            <person name="Detter J.C."/>
            <person name="Fletcher R."/>
            <person name="Gerhard D.S."/>
            <person name="Goodstein D."/>
            <person name="Graves T."/>
            <person name="Grigoriev I.V."/>
            <person name="Grimwood J."/>
            <person name="Kawashima T."/>
            <person name="Lindquist E."/>
            <person name="Lucas S.M."/>
            <person name="Mead P.E."/>
            <person name="Mitros T."/>
            <person name="Ogino H."/>
            <person name="Ohta Y."/>
            <person name="Poliakov A.V."/>
            <person name="Pollet N."/>
            <person name="Robert J."/>
            <person name="Salamov A."/>
            <person name="Sater A.K."/>
            <person name="Schmutz J."/>
            <person name="Terry A."/>
            <person name="Vize P.D."/>
            <person name="Warren W.C."/>
            <person name="Wells D."/>
            <person name="Wills A."/>
            <person name="Wilson R.K."/>
            <person name="Zimmerman L.B."/>
            <person name="Zorn A.M."/>
            <person name="Grainger R."/>
            <person name="Grammer T."/>
            <person name="Khokha M.K."/>
            <person name="Richardson P.M."/>
            <person name="Rokhsar D.S."/>
        </authorList>
    </citation>
    <scope>NUCLEOTIDE SEQUENCE [LARGE SCALE GENOMIC DNA]</scope>
</reference>
<reference key="3">
    <citation type="submission" date="2004-03" db="EMBL/GenBank/DDBJ databases">
        <authorList>
            <consortium name="NIH - Xenopus Gene Collection (XGC) project"/>
        </authorList>
    </citation>
    <scope>NUCLEOTIDE SEQUENCE [LARGE SCALE MRNA]</scope>
    <source>
        <tissue>Embryo</tissue>
    </source>
</reference>
<evidence type="ECO:0000255" key="1"/>
<evidence type="ECO:0000256" key="2">
    <source>
        <dbReference type="SAM" id="MobiDB-lite"/>
    </source>
</evidence>
<evidence type="ECO:0000305" key="3"/>